<keyword id="KW-0145">Chemotaxis</keyword>
<keyword id="KW-0202">Cytokine</keyword>
<keyword id="KW-1015">Disulfide bond</keyword>
<keyword id="KW-0325">Glycoprotein</keyword>
<keyword id="KW-0395">Inflammatory response</keyword>
<keyword id="KW-1185">Reference proteome</keyword>
<keyword id="KW-0964">Secreted</keyword>
<keyword id="KW-0732">Signal</keyword>
<dbReference type="EMBL" id="AJ251188">
    <property type="protein sequence ID" value="CAB61624.1"/>
    <property type="molecule type" value="mRNA"/>
</dbReference>
<dbReference type="RefSeq" id="NP_001075340.1">
    <property type="nucleotide sequence ID" value="NM_001081871.1"/>
</dbReference>
<dbReference type="SMR" id="Q9TTQ4"/>
<dbReference type="FunCoup" id="Q9TTQ4">
    <property type="interactions" value="124"/>
</dbReference>
<dbReference type="STRING" id="9796.ENSECAP00000048212"/>
<dbReference type="GlyCosmos" id="Q9TTQ4">
    <property type="glycosylation" value="1 site, No reported glycans"/>
</dbReference>
<dbReference type="GeneID" id="100033949"/>
<dbReference type="KEGG" id="ecb:100033949"/>
<dbReference type="CTD" id="6356"/>
<dbReference type="InParanoid" id="Q9TTQ4"/>
<dbReference type="OrthoDB" id="9404618at2759"/>
<dbReference type="Proteomes" id="UP000002281">
    <property type="component" value="Chromosome 11"/>
</dbReference>
<dbReference type="Bgee" id="ENSECAG00000036715">
    <property type="expression patterns" value="Expressed in triceps brachii and 15 other cell types or tissues"/>
</dbReference>
<dbReference type="GO" id="GO:0005615">
    <property type="term" value="C:extracellular space"/>
    <property type="evidence" value="ECO:0000318"/>
    <property type="project" value="GO_Central"/>
</dbReference>
<dbReference type="GO" id="GO:0048020">
    <property type="term" value="F:CCR chemokine receptor binding"/>
    <property type="evidence" value="ECO:0000318"/>
    <property type="project" value="GO_Central"/>
</dbReference>
<dbReference type="GO" id="GO:0008009">
    <property type="term" value="F:chemokine activity"/>
    <property type="evidence" value="ECO:0000318"/>
    <property type="project" value="GO_Central"/>
</dbReference>
<dbReference type="GO" id="GO:0061844">
    <property type="term" value="P:antimicrobial humoral immune response mediated by antimicrobial peptide"/>
    <property type="evidence" value="ECO:0000318"/>
    <property type="project" value="GO_Central"/>
</dbReference>
<dbReference type="GO" id="GO:0070098">
    <property type="term" value="P:chemokine-mediated signaling pathway"/>
    <property type="evidence" value="ECO:0000318"/>
    <property type="project" value="GO_Central"/>
</dbReference>
<dbReference type="GO" id="GO:0048245">
    <property type="term" value="P:eosinophil chemotaxis"/>
    <property type="evidence" value="ECO:0000318"/>
    <property type="project" value="GO_Central"/>
</dbReference>
<dbReference type="GO" id="GO:0006954">
    <property type="term" value="P:inflammatory response"/>
    <property type="evidence" value="ECO:0000318"/>
    <property type="project" value="GO_Central"/>
</dbReference>
<dbReference type="GO" id="GO:0030335">
    <property type="term" value="P:positive regulation of cell migration"/>
    <property type="evidence" value="ECO:0000318"/>
    <property type="project" value="GO_Central"/>
</dbReference>
<dbReference type="CDD" id="cd00272">
    <property type="entry name" value="Chemokine_CC"/>
    <property type="match status" value="1"/>
</dbReference>
<dbReference type="FunFam" id="2.40.50.40:FF:000002">
    <property type="entry name" value="C-C motif chemokine"/>
    <property type="match status" value="1"/>
</dbReference>
<dbReference type="Gene3D" id="2.40.50.40">
    <property type="match status" value="1"/>
</dbReference>
<dbReference type="InterPro" id="IPR039809">
    <property type="entry name" value="Chemokine_b/g/d"/>
</dbReference>
<dbReference type="InterPro" id="IPR000827">
    <property type="entry name" value="Chemokine_CC_CS"/>
</dbReference>
<dbReference type="InterPro" id="IPR001811">
    <property type="entry name" value="Chemokine_IL8-like_dom"/>
</dbReference>
<dbReference type="InterPro" id="IPR036048">
    <property type="entry name" value="Interleukin_8-like_sf"/>
</dbReference>
<dbReference type="PANTHER" id="PTHR12015:SF147">
    <property type="entry name" value="C-C MOTIF CHEMOKINE 13"/>
    <property type="match status" value="1"/>
</dbReference>
<dbReference type="PANTHER" id="PTHR12015">
    <property type="entry name" value="SMALL INDUCIBLE CYTOKINE A"/>
    <property type="match status" value="1"/>
</dbReference>
<dbReference type="Pfam" id="PF00048">
    <property type="entry name" value="IL8"/>
    <property type="match status" value="1"/>
</dbReference>
<dbReference type="SMART" id="SM00199">
    <property type="entry name" value="SCY"/>
    <property type="match status" value="1"/>
</dbReference>
<dbReference type="SUPFAM" id="SSF54117">
    <property type="entry name" value="Interleukin 8-like chemokines"/>
    <property type="match status" value="1"/>
</dbReference>
<dbReference type="PROSITE" id="PS00472">
    <property type="entry name" value="SMALL_CYTOKINES_CC"/>
    <property type="match status" value="1"/>
</dbReference>
<comment type="function">
    <text evidence="2 3">In response to the presence of allergens, this protein directly promotes the accumulation of eosinophils (a prominent feature of allergic inflammatory reactions), but not lymphocytes, macrophages or neutrophils (By similarity). Binds to CCR3 (By similarity).</text>
</comment>
<comment type="subcellular location">
    <subcellularLocation>
        <location evidence="4">Secreted</location>
    </subcellularLocation>
</comment>
<comment type="similarity">
    <text evidence="5">Belongs to the intercrine beta (chemokine CC) family.</text>
</comment>
<evidence type="ECO:0000250" key="1"/>
<evidence type="ECO:0000250" key="2">
    <source>
        <dbReference type="UniProtKB" id="P48298"/>
    </source>
</evidence>
<evidence type="ECO:0000250" key="3">
    <source>
        <dbReference type="UniProtKB" id="P51671"/>
    </source>
</evidence>
<evidence type="ECO:0000250" key="4">
    <source>
        <dbReference type="UniProtKB" id="P97545"/>
    </source>
</evidence>
<evidence type="ECO:0000305" key="5"/>
<gene>
    <name type="primary">CCL11</name>
    <name type="synonym">SCYA11</name>
</gene>
<name>CCL11_HORSE</name>
<proteinExistence type="inferred from homology"/>
<sequence>MKVSAALLCLLLTTAAFSTQVLAQPVSISTVCCFNVASRKISFQRLQSYRKITSSKCPQKAVIFKTKQAKKICADPKQKWVQDAMKYLDENSRTTKYSSF</sequence>
<feature type="signal peptide" evidence="1">
    <location>
        <begin position="1"/>
        <end position="23"/>
    </location>
</feature>
<feature type="chain" id="PRO_0000005194" description="Eotaxin">
    <location>
        <begin position="24"/>
        <end position="100"/>
    </location>
</feature>
<feature type="glycosylation site" description="O-linked (GalNAc...) threonine" evidence="3">
    <location>
        <position position="94"/>
    </location>
</feature>
<feature type="disulfide bond" evidence="3">
    <location>
        <begin position="32"/>
        <end position="57"/>
    </location>
</feature>
<feature type="disulfide bond" evidence="3">
    <location>
        <begin position="33"/>
        <end position="73"/>
    </location>
</feature>
<reference key="1">
    <citation type="journal article" date="2000" name="Vet. Immunol. Immunopathol.">
        <title>Cloning of equine chemokines eotaxin, monocyte chemoattractant protein (MCP)-1, MCP-2 and MCP-4, mRNA expression in tissues and induction by IL-4 in dermal fibroblasts.</title>
        <authorList>
            <person name="Benarafa C."/>
            <person name="Cunningham F.M."/>
            <person name="Hamblin A.S."/>
            <person name="Horohov D.W."/>
            <person name="Collins M.E."/>
        </authorList>
    </citation>
    <scope>NUCLEOTIDE SEQUENCE [MRNA]</scope>
</reference>
<organism>
    <name type="scientific">Equus caballus</name>
    <name type="common">Horse</name>
    <dbReference type="NCBI Taxonomy" id="9796"/>
    <lineage>
        <taxon>Eukaryota</taxon>
        <taxon>Metazoa</taxon>
        <taxon>Chordata</taxon>
        <taxon>Craniata</taxon>
        <taxon>Vertebrata</taxon>
        <taxon>Euteleostomi</taxon>
        <taxon>Mammalia</taxon>
        <taxon>Eutheria</taxon>
        <taxon>Laurasiatheria</taxon>
        <taxon>Perissodactyla</taxon>
        <taxon>Equidae</taxon>
        <taxon>Equus</taxon>
    </lineage>
</organism>
<accession>Q9TTQ4</accession>
<protein>
    <recommendedName>
        <fullName>Eotaxin</fullName>
    </recommendedName>
    <alternativeName>
        <fullName>C-C motif chemokine 11</fullName>
    </alternativeName>
    <alternativeName>
        <fullName>Small-inducible cytokine A11</fullName>
    </alternativeName>
</protein>